<proteinExistence type="inferred from homology"/>
<dbReference type="EC" id="2.7.7.7" evidence="1"/>
<dbReference type="EMBL" id="AE005672">
    <property type="protein sequence ID" value="AAK74452.1"/>
    <property type="molecule type" value="Genomic_DNA"/>
</dbReference>
<dbReference type="PIR" id="C95032">
    <property type="entry name" value="C95032"/>
</dbReference>
<dbReference type="RefSeq" id="WP_000071390.1">
    <property type="nucleotide sequence ID" value="NZ_CP155539.1"/>
</dbReference>
<dbReference type="SMR" id="Q97SQ2"/>
<dbReference type="PaxDb" id="170187-SP_0274"/>
<dbReference type="EnsemblBacteria" id="AAK74452">
    <property type="protein sequence ID" value="AAK74452"/>
    <property type="gene ID" value="SP_0274"/>
</dbReference>
<dbReference type="KEGG" id="spn:SP_0274"/>
<dbReference type="eggNOG" id="COG2176">
    <property type="taxonomic scope" value="Bacteria"/>
</dbReference>
<dbReference type="PhylomeDB" id="Q97SQ2"/>
<dbReference type="BioCyc" id="SPNE170187:G1FZB-280-MONOMER"/>
<dbReference type="Proteomes" id="UP000000585">
    <property type="component" value="Chromosome"/>
</dbReference>
<dbReference type="GO" id="GO:0005737">
    <property type="term" value="C:cytoplasm"/>
    <property type="evidence" value="ECO:0007669"/>
    <property type="project" value="UniProtKB-SubCell"/>
</dbReference>
<dbReference type="GO" id="GO:0008408">
    <property type="term" value="F:3'-5' exonuclease activity"/>
    <property type="evidence" value="ECO:0007669"/>
    <property type="project" value="UniProtKB-UniRule"/>
</dbReference>
<dbReference type="GO" id="GO:0003677">
    <property type="term" value="F:DNA binding"/>
    <property type="evidence" value="ECO:0007669"/>
    <property type="project" value="UniProtKB-UniRule"/>
</dbReference>
<dbReference type="GO" id="GO:0003887">
    <property type="term" value="F:DNA-directed DNA polymerase activity"/>
    <property type="evidence" value="ECO:0007669"/>
    <property type="project" value="UniProtKB-UniRule"/>
</dbReference>
<dbReference type="GO" id="GO:0006261">
    <property type="term" value="P:DNA-templated DNA replication"/>
    <property type="evidence" value="ECO:0007669"/>
    <property type="project" value="UniProtKB-UniRule"/>
</dbReference>
<dbReference type="CDD" id="cd06127">
    <property type="entry name" value="DEDDh"/>
    <property type="match status" value="1"/>
</dbReference>
<dbReference type="CDD" id="cd07435">
    <property type="entry name" value="PHP_PolIIIA_POLC"/>
    <property type="match status" value="1"/>
</dbReference>
<dbReference type="CDD" id="cd04484">
    <property type="entry name" value="polC_OBF"/>
    <property type="match status" value="1"/>
</dbReference>
<dbReference type="FunFam" id="3.30.420.10:FF:000045">
    <property type="entry name" value="3'-5' exonuclease DinG"/>
    <property type="match status" value="1"/>
</dbReference>
<dbReference type="Gene3D" id="1.10.150.870">
    <property type="match status" value="1"/>
</dbReference>
<dbReference type="Gene3D" id="3.30.1900.20">
    <property type="match status" value="1"/>
</dbReference>
<dbReference type="Gene3D" id="6.10.140.1510">
    <property type="match status" value="1"/>
</dbReference>
<dbReference type="Gene3D" id="3.20.20.140">
    <property type="entry name" value="Metal-dependent hydrolases"/>
    <property type="match status" value="1"/>
</dbReference>
<dbReference type="Gene3D" id="2.40.50.140">
    <property type="entry name" value="Nucleic acid-binding proteins"/>
    <property type="match status" value="1"/>
</dbReference>
<dbReference type="Gene3D" id="1.10.150.700">
    <property type="entry name" value="PolC, middle finger domain"/>
    <property type="match status" value="1"/>
</dbReference>
<dbReference type="Gene3D" id="3.30.420.10">
    <property type="entry name" value="Ribonuclease H-like superfamily/Ribonuclease H"/>
    <property type="match status" value="1"/>
</dbReference>
<dbReference type="HAMAP" id="MF_00356">
    <property type="entry name" value="DNApol_PolC"/>
    <property type="match status" value="1"/>
</dbReference>
<dbReference type="InterPro" id="IPR011708">
    <property type="entry name" value="DNA_pol3_alpha_NTPase_dom"/>
</dbReference>
<dbReference type="InterPro" id="IPR040982">
    <property type="entry name" value="DNA_pol3_finger"/>
</dbReference>
<dbReference type="InterPro" id="IPR024754">
    <property type="entry name" value="DNA_PolC-like_N_II"/>
</dbReference>
<dbReference type="InterPro" id="IPR028112">
    <property type="entry name" value="DNA_PolC-type_N_I"/>
</dbReference>
<dbReference type="InterPro" id="IPR004805">
    <property type="entry name" value="DnaE2/DnaE/PolC"/>
</dbReference>
<dbReference type="InterPro" id="IPR006054">
    <property type="entry name" value="DnaQ"/>
</dbReference>
<dbReference type="InterPro" id="IPR013520">
    <property type="entry name" value="Exonuclease_RNaseT/DNA_pol3"/>
</dbReference>
<dbReference type="InterPro" id="IPR012340">
    <property type="entry name" value="NA-bd_OB-fold"/>
</dbReference>
<dbReference type="InterPro" id="IPR004013">
    <property type="entry name" value="PHP_dom"/>
</dbReference>
<dbReference type="InterPro" id="IPR003141">
    <property type="entry name" value="Pol/His_phosphatase_N"/>
</dbReference>
<dbReference type="InterPro" id="IPR006308">
    <property type="entry name" value="Pol_III_a_PolC-type_gram_pos"/>
</dbReference>
<dbReference type="InterPro" id="IPR044923">
    <property type="entry name" value="PolC_middle_finger_sf"/>
</dbReference>
<dbReference type="InterPro" id="IPR012337">
    <property type="entry name" value="RNaseH-like_sf"/>
</dbReference>
<dbReference type="InterPro" id="IPR036397">
    <property type="entry name" value="RNaseH_sf"/>
</dbReference>
<dbReference type="NCBIfam" id="TIGR00573">
    <property type="entry name" value="dnaq"/>
    <property type="match status" value="1"/>
</dbReference>
<dbReference type="NCBIfam" id="TIGR01405">
    <property type="entry name" value="polC_Gram_pos"/>
    <property type="match status" value="1"/>
</dbReference>
<dbReference type="NCBIfam" id="NF001688">
    <property type="entry name" value="PRK00448.1"/>
    <property type="match status" value="1"/>
</dbReference>
<dbReference type="PANTHER" id="PTHR32294:SF5">
    <property type="entry name" value="DNA POLYMERASE III POLC-TYPE"/>
    <property type="match status" value="1"/>
</dbReference>
<dbReference type="PANTHER" id="PTHR32294">
    <property type="entry name" value="DNA POLYMERASE III SUBUNIT ALPHA"/>
    <property type="match status" value="1"/>
</dbReference>
<dbReference type="Pfam" id="PF14480">
    <property type="entry name" value="DNA_pol3_a_NI"/>
    <property type="match status" value="1"/>
</dbReference>
<dbReference type="Pfam" id="PF11490">
    <property type="entry name" value="DNA_pol3_a_NII"/>
    <property type="match status" value="1"/>
</dbReference>
<dbReference type="Pfam" id="PF07733">
    <property type="entry name" value="DNA_pol3_alpha"/>
    <property type="match status" value="2"/>
</dbReference>
<dbReference type="Pfam" id="PF17657">
    <property type="entry name" value="DNA_pol3_finger"/>
    <property type="match status" value="1"/>
</dbReference>
<dbReference type="Pfam" id="PF02811">
    <property type="entry name" value="PHP"/>
    <property type="match status" value="1"/>
</dbReference>
<dbReference type="Pfam" id="PF00929">
    <property type="entry name" value="RNase_T"/>
    <property type="match status" value="1"/>
</dbReference>
<dbReference type="SMART" id="SM00479">
    <property type="entry name" value="EXOIII"/>
    <property type="match status" value="1"/>
</dbReference>
<dbReference type="SMART" id="SM00481">
    <property type="entry name" value="POLIIIAc"/>
    <property type="match status" value="1"/>
</dbReference>
<dbReference type="SUPFAM" id="SSF50249">
    <property type="entry name" value="Nucleic acid-binding proteins"/>
    <property type="match status" value="1"/>
</dbReference>
<dbReference type="SUPFAM" id="SSF53098">
    <property type="entry name" value="Ribonuclease H-like"/>
    <property type="match status" value="1"/>
</dbReference>
<name>DPO3_STRPN</name>
<gene>
    <name evidence="1" type="primary">polC</name>
    <name type="ordered locus">SP_0274</name>
</gene>
<feature type="chain" id="PRO_0000204598" description="DNA polymerase III PolC-type">
    <location>
        <begin position="1"/>
        <end position="1463"/>
    </location>
</feature>
<feature type="domain" description="Exonuclease">
    <location>
        <begin position="425"/>
        <end position="581"/>
    </location>
</feature>
<evidence type="ECO:0000255" key="1">
    <source>
        <dbReference type="HAMAP-Rule" id="MF_00356"/>
    </source>
</evidence>
<sequence>MSNSFEILMNQLGMPAEMRQAPALAQANIERVVVHKISKVWEFHFVFSNILPIEIFLELKKGLSEEFSKTGNKAVFEIKARSQEFSNQLLQSYYREAFSEGPCASQGFKSLYQNLQVRAEGNQLFIEGSEAIDKEHFKKNHLPNLAKQLEKFGFPTFNCQVEKNDVLTQEQEEAFHAENEQIVQAANEEALRAMEQLEQMAPPPAEEKPAFDFQAKKAAAKPKLDKAEITPMIEVTTEENRLVFEGVVFDVEQKVTRTGRVLINFKMTDYTSSFSMQKWVKNEEEAQKFDLIKKNSWLRVRGNVEMNNFTRDLTMNVQDLQEVVHYERKDLMPEGERRVEFHAHTNMSTMDALPEVEEIVATAAKWGHKAVAITDHGNVQSFPHGYKAAKKAGIQLIYGMEANIVEDRVPIVYNEVEMDLSEATYVVFDVETTGLSAIYNDLIQVAASKMYKGNVIAEFDEFINPGHPLSAFTTELTGITDDHVKNAKPLEQVLQEFQEFCKDTVLVAHNATFDVGFMNANYERHDLPKISQPVIDTLEFARNLYPEYKRHGLGPLTKRFGVALEHHHMANYDAEATGRLLFIFIKEVAEKHGVTDLARLNIDLISPDSYKKARIKHATIYVKNQVGLKNIFKLVSLSNTKYFEGVPRIPRTVLDAHREGLILGSACSEGEVFDVVVSQGVDAAVEVAKYYDFIEVMPPAIYAPLIAKEQVKDMEELQTIIKSLIEVGDRLGKPVLATGNVHYIEPEEEIYREIIVRSLGQGAMINRTIGHGEHAQPAPLPKAHFRTTNEMLDEFAFLGEELARKLVIENTNALAEIFESVEVVKGDLYTPFIDKAEETVAELTYKKAFEIYGNPLPDIVDLRIEKELTSILGNGFAVIYLASQMLVQRSNERGYLVGSRGSVGSSFVATMIGITEVNPLSPHYVCGQCQYSEFITDGSYGSGFDMPHKDCPNCGHKLSKNGQDIPFETFLGFDGDKVPDIDLNFSGEDQPSAHLDVRDIFGEEYAFRAGTVGTVAAKTAYGFVKGYERDYGKFYRDAEVERLAQGAAGVKRTTGQHPGGIVVIPNYMDVYDFTPVQYPADDVTAEWQTTHFNFHDIDENVLKLDVLGHDDPTMIRKLQDLSGIDPNKIPMDDEGVMALFSGTDVLGVTPEQIGTPTGMLGIPEFGTNFVRGMVDETHPTTFAELLQLSGLSHGTDVWLGNAQDLIKQGIADLSTVIGCRDDIMVYLMHAGLEPKMAFTIMERVRKGLWLKISEEERNGYIEAMKANKVPEWYIESCGKIKYMFPKAHAAAYVMMALRVAYFKVHHPIYYYCAYFSIRAKAFDIKTMGAGLEVIKRRMEEISEKRKNNEASNVEIDLYTTLEIVNEMWERGFKFGKLDLYCSQATEFLIDGDTLIPPFVAMDGLGENVAKQLVRAREEGEFLSKTELRKRGGLSSTLVEKMDEMGILGNMPEDNQLSLFDELF</sequence>
<organism>
    <name type="scientific">Streptococcus pneumoniae serotype 4 (strain ATCC BAA-334 / TIGR4)</name>
    <dbReference type="NCBI Taxonomy" id="170187"/>
    <lineage>
        <taxon>Bacteria</taxon>
        <taxon>Bacillati</taxon>
        <taxon>Bacillota</taxon>
        <taxon>Bacilli</taxon>
        <taxon>Lactobacillales</taxon>
        <taxon>Streptococcaceae</taxon>
        <taxon>Streptococcus</taxon>
    </lineage>
</organism>
<accession>Q97SQ2</accession>
<reference key="1">
    <citation type="journal article" date="2001" name="Science">
        <title>Complete genome sequence of a virulent isolate of Streptococcus pneumoniae.</title>
        <authorList>
            <person name="Tettelin H."/>
            <person name="Nelson K.E."/>
            <person name="Paulsen I.T."/>
            <person name="Eisen J.A."/>
            <person name="Read T.D."/>
            <person name="Peterson S.N."/>
            <person name="Heidelberg J.F."/>
            <person name="DeBoy R.T."/>
            <person name="Haft D.H."/>
            <person name="Dodson R.J."/>
            <person name="Durkin A.S."/>
            <person name="Gwinn M.L."/>
            <person name="Kolonay J.F."/>
            <person name="Nelson W.C."/>
            <person name="Peterson J.D."/>
            <person name="Umayam L.A."/>
            <person name="White O."/>
            <person name="Salzberg S.L."/>
            <person name="Lewis M.R."/>
            <person name="Radune D."/>
            <person name="Holtzapple E.K."/>
            <person name="Khouri H.M."/>
            <person name="Wolf A.M."/>
            <person name="Utterback T.R."/>
            <person name="Hansen C.L."/>
            <person name="McDonald L.A."/>
            <person name="Feldblyum T.V."/>
            <person name="Angiuoli S.V."/>
            <person name="Dickinson T."/>
            <person name="Hickey E.K."/>
            <person name="Holt I.E."/>
            <person name="Loftus B.J."/>
            <person name="Yang F."/>
            <person name="Smith H.O."/>
            <person name="Venter J.C."/>
            <person name="Dougherty B.A."/>
            <person name="Morrison D.A."/>
            <person name="Hollingshead S.K."/>
            <person name="Fraser C.M."/>
        </authorList>
    </citation>
    <scope>NUCLEOTIDE SEQUENCE [LARGE SCALE GENOMIC DNA]</scope>
    <source>
        <strain>ATCC BAA-334 / TIGR4</strain>
    </source>
</reference>
<comment type="function">
    <text evidence="1">Required for replicative DNA synthesis. This DNA polymerase also exhibits 3' to 5' exonuclease activity.</text>
</comment>
<comment type="catalytic activity">
    <reaction evidence="1">
        <text>DNA(n) + a 2'-deoxyribonucleoside 5'-triphosphate = DNA(n+1) + diphosphate</text>
        <dbReference type="Rhea" id="RHEA:22508"/>
        <dbReference type="Rhea" id="RHEA-COMP:17339"/>
        <dbReference type="Rhea" id="RHEA-COMP:17340"/>
        <dbReference type="ChEBI" id="CHEBI:33019"/>
        <dbReference type="ChEBI" id="CHEBI:61560"/>
        <dbReference type="ChEBI" id="CHEBI:173112"/>
        <dbReference type="EC" id="2.7.7.7"/>
    </reaction>
</comment>
<comment type="subcellular location">
    <subcellularLocation>
        <location evidence="1">Cytoplasm</location>
    </subcellularLocation>
</comment>
<comment type="similarity">
    <text evidence="1">Belongs to the DNA polymerase type-C family. PolC subfamily.</text>
</comment>
<keyword id="KW-0963">Cytoplasm</keyword>
<keyword id="KW-0235">DNA replication</keyword>
<keyword id="KW-0239">DNA-directed DNA polymerase</keyword>
<keyword id="KW-0269">Exonuclease</keyword>
<keyword id="KW-0378">Hydrolase</keyword>
<keyword id="KW-0540">Nuclease</keyword>
<keyword id="KW-0548">Nucleotidyltransferase</keyword>
<keyword id="KW-1185">Reference proteome</keyword>
<keyword id="KW-0808">Transferase</keyword>
<protein>
    <recommendedName>
        <fullName evidence="1">DNA polymerase III PolC-type</fullName>
        <shortName evidence="1">PolIII</shortName>
        <ecNumber evidence="1">2.7.7.7</ecNumber>
    </recommendedName>
</protein>